<reference key="1">
    <citation type="journal article" date="2007" name="J. Bacteriol.">
        <title>The complete genome sequence of Roseobacter denitrificans reveals a mixotrophic rather than photosynthetic metabolism.</title>
        <authorList>
            <person name="Swingley W.D."/>
            <person name="Sadekar S."/>
            <person name="Mastrian S.D."/>
            <person name="Matthies H.J."/>
            <person name="Hao J."/>
            <person name="Ramos H."/>
            <person name="Acharya C.R."/>
            <person name="Conrad A.L."/>
            <person name="Taylor H.L."/>
            <person name="Dejesa L.C."/>
            <person name="Shah M.K."/>
            <person name="O'Huallachain M.E."/>
            <person name="Lince M.T."/>
            <person name="Blankenship R.E."/>
            <person name="Beatty J.T."/>
            <person name="Touchman J.W."/>
        </authorList>
    </citation>
    <scope>NUCLEOTIDE SEQUENCE [LARGE SCALE GENOMIC DNA]</scope>
    <source>
        <strain>ATCC 33942 / OCh 114</strain>
    </source>
</reference>
<feature type="chain" id="PRO_0000314216" description="UPF0262 protein RD1_1069">
    <location>
        <begin position="1"/>
        <end position="159"/>
    </location>
</feature>
<protein>
    <recommendedName>
        <fullName evidence="1">UPF0262 protein RD1_1069</fullName>
    </recommendedName>
</protein>
<dbReference type="EMBL" id="CP000362">
    <property type="protein sequence ID" value="ABG30729.1"/>
    <property type="molecule type" value="Genomic_DNA"/>
</dbReference>
<dbReference type="RefSeq" id="WP_011567351.1">
    <property type="nucleotide sequence ID" value="NC_008209.1"/>
</dbReference>
<dbReference type="STRING" id="375451.RD1_1069"/>
<dbReference type="KEGG" id="rde:RD1_1069"/>
<dbReference type="eggNOG" id="COG5328">
    <property type="taxonomic scope" value="Bacteria"/>
</dbReference>
<dbReference type="HOGENOM" id="CLU_112904_0_0_5"/>
<dbReference type="OrthoDB" id="9798434at2"/>
<dbReference type="Proteomes" id="UP000007029">
    <property type="component" value="Chromosome"/>
</dbReference>
<dbReference type="HAMAP" id="MF_00678">
    <property type="entry name" value="UPF0262"/>
    <property type="match status" value="1"/>
</dbReference>
<dbReference type="InterPro" id="IPR008321">
    <property type="entry name" value="UCP032146"/>
</dbReference>
<dbReference type="NCBIfam" id="NF002769">
    <property type="entry name" value="PRK02853.1"/>
    <property type="match status" value="1"/>
</dbReference>
<dbReference type="Pfam" id="PF06793">
    <property type="entry name" value="UPF0262"/>
    <property type="match status" value="1"/>
</dbReference>
<dbReference type="PIRSF" id="PIRSF032146">
    <property type="entry name" value="UCP032146"/>
    <property type="match status" value="1"/>
</dbReference>
<proteinExistence type="inferred from homology"/>
<keyword id="KW-1185">Reference proteome</keyword>
<organism>
    <name type="scientific">Roseobacter denitrificans (strain ATCC 33942 / OCh 114)</name>
    <name type="common">Erythrobacter sp. (strain OCh 114)</name>
    <name type="synonym">Roseobacter denitrificans</name>
    <dbReference type="NCBI Taxonomy" id="375451"/>
    <lineage>
        <taxon>Bacteria</taxon>
        <taxon>Pseudomonadati</taxon>
        <taxon>Pseudomonadota</taxon>
        <taxon>Alphaproteobacteria</taxon>
        <taxon>Rhodobacterales</taxon>
        <taxon>Roseobacteraceae</taxon>
        <taxon>Roseobacter</taxon>
    </lineage>
</organism>
<comment type="similarity">
    <text evidence="1">Belongs to the UPF0262 family.</text>
</comment>
<sequence length="159" mass="18074">MSRISHITLDDSGLPPPTPEIEQERKVAMFDLLEDNTFVLPPREGRPVPEGPYHVSLAIRDKRLVFDVNTETAEKAAEFHLSLGPFRQVVKDYFQICESYFDAVKKLPPSQIETIDMARRGIHNEGSRVLQERLEGKADIDIDTARRLFTLICVLHFGG</sequence>
<accession>Q16BB4</accession>
<evidence type="ECO:0000255" key="1">
    <source>
        <dbReference type="HAMAP-Rule" id="MF_00678"/>
    </source>
</evidence>
<gene>
    <name type="ordered locus">RD1_1069</name>
</gene>
<name>Y1069_ROSDO</name>